<name>MSCL_XANOR</name>
<evidence type="ECO:0000255" key="1">
    <source>
        <dbReference type="HAMAP-Rule" id="MF_00115"/>
    </source>
</evidence>
<evidence type="ECO:0000305" key="2"/>
<reference key="1">
    <citation type="journal article" date="2005" name="Nucleic Acids Res.">
        <title>The genome sequence of Xanthomonas oryzae pathovar oryzae KACC10331, the bacterial blight pathogen of rice.</title>
        <authorList>
            <person name="Lee B.-M."/>
            <person name="Park Y.-J."/>
            <person name="Park D.-S."/>
            <person name="Kang H.-W."/>
            <person name="Kim J.-G."/>
            <person name="Song E.-S."/>
            <person name="Park I.-C."/>
            <person name="Yoon U.-H."/>
            <person name="Hahn J.-H."/>
            <person name="Koo B.-S."/>
            <person name="Lee G.-B."/>
            <person name="Kim H."/>
            <person name="Park H.-S."/>
            <person name="Yoon K.-O."/>
            <person name="Kim J.-H."/>
            <person name="Jung C.-H."/>
            <person name="Koh N.-H."/>
            <person name="Seo J.-S."/>
            <person name="Go S.-J."/>
        </authorList>
    </citation>
    <scope>NUCLEOTIDE SEQUENCE [LARGE SCALE GENOMIC DNA]</scope>
    <source>
        <strain>KACC10331 / KXO85</strain>
    </source>
</reference>
<proteinExistence type="inferred from homology"/>
<protein>
    <recommendedName>
        <fullName evidence="1">Large-conductance mechanosensitive channel</fullName>
    </recommendedName>
</protein>
<comment type="function">
    <text evidence="1">Channel that opens in response to stretch forces in the membrane lipid bilayer. May participate in the regulation of osmotic pressure changes within the cell.</text>
</comment>
<comment type="subunit">
    <text evidence="1">Homopentamer.</text>
</comment>
<comment type="subcellular location">
    <subcellularLocation>
        <location evidence="1">Cell inner membrane</location>
        <topology evidence="1">Multi-pass membrane protein</topology>
    </subcellularLocation>
</comment>
<comment type="similarity">
    <text evidence="1">Belongs to the MscL family.</text>
</comment>
<comment type="sequence caution" evidence="2">
    <conflict type="erroneous initiation">
        <sequence resource="EMBL-CDS" id="AAW76635"/>
    </conflict>
</comment>
<sequence>MGMVSEFKQFAIRGNVIDLAVGVVIGAAFGKIVTALVEKIIMPPIGWAIGNVDFSRLAWVLKPAGVDATGKDIPAVAIGYGDFINTVVQFVIIAFAIFLLVKLINRVTNRKPDAPKGPSEEVLLLREIRDSLKNDTLKSG</sequence>
<organism>
    <name type="scientific">Xanthomonas oryzae pv. oryzae (strain KACC10331 / KXO85)</name>
    <dbReference type="NCBI Taxonomy" id="291331"/>
    <lineage>
        <taxon>Bacteria</taxon>
        <taxon>Pseudomonadati</taxon>
        <taxon>Pseudomonadota</taxon>
        <taxon>Gammaproteobacteria</taxon>
        <taxon>Lysobacterales</taxon>
        <taxon>Lysobacteraceae</taxon>
        <taxon>Xanthomonas</taxon>
    </lineage>
</organism>
<gene>
    <name evidence="1" type="primary">mscL</name>
    <name type="ordered locus">XOO3381</name>
</gene>
<dbReference type="EMBL" id="AE013598">
    <property type="protein sequence ID" value="AAW76635.1"/>
    <property type="status" value="ALT_INIT"/>
    <property type="molecule type" value="Genomic_DNA"/>
</dbReference>
<dbReference type="SMR" id="Q5GXD6"/>
<dbReference type="STRING" id="291331.XOO3381"/>
<dbReference type="KEGG" id="xoo:XOO3381"/>
<dbReference type="HOGENOM" id="CLU_095787_0_0_6"/>
<dbReference type="Proteomes" id="UP000006735">
    <property type="component" value="Chromosome"/>
</dbReference>
<dbReference type="GO" id="GO:0005886">
    <property type="term" value="C:plasma membrane"/>
    <property type="evidence" value="ECO:0007669"/>
    <property type="project" value="UniProtKB-SubCell"/>
</dbReference>
<dbReference type="GO" id="GO:0008381">
    <property type="term" value="F:mechanosensitive monoatomic ion channel activity"/>
    <property type="evidence" value="ECO:0007669"/>
    <property type="project" value="UniProtKB-UniRule"/>
</dbReference>
<dbReference type="FunFam" id="1.10.1200.120:FF:000001">
    <property type="entry name" value="Large-conductance mechanosensitive channel"/>
    <property type="match status" value="1"/>
</dbReference>
<dbReference type="Gene3D" id="1.10.1200.120">
    <property type="entry name" value="Large-conductance mechanosensitive channel, MscL, domain 1"/>
    <property type="match status" value="1"/>
</dbReference>
<dbReference type="HAMAP" id="MF_00115">
    <property type="entry name" value="MscL"/>
    <property type="match status" value="1"/>
</dbReference>
<dbReference type="InterPro" id="IPR019823">
    <property type="entry name" value="Mechanosensitive_channel_CS"/>
</dbReference>
<dbReference type="InterPro" id="IPR001185">
    <property type="entry name" value="MS_channel"/>
</dbReference>
<dbReference type="InterPro" id="IPR037673">
    <property type="entry name" value="MSC/AndL"/>
</dbReference>
<dbReference type="InterPro" id="IPR036019">
    <property type="entry name" value="MscL_channel"/>
</dbReference>
<dbReference type="NCBIfam" id="TIGR00220">
    <property type="entry name" value="mscL"/>
    <property type="match status" value="1"/>
</dbReference>
<dbReference type="NCBIfam" id="NF001843">
    <property type="entry name" value="PRK00567.1-4"/>
    <property type="match status" value="1"/>
</dbReference>
<dbReference type="PANTHER" id="PTHR30266:SF2">
    <property type="entry name" value="LARGE-CONDUCTANCE MECHANOSENSITIVE CHANNEL"/>
    <property type="match status" value="1"/>
</dbReference>
<dbReference type="PANTHER" id="PTHR30266">
    <property type="entry name" value="MECHANOSENSITIVE CHANNEL MSCL"/>
    <property type="match status" value="1"/>
</dbReference>
<dbReference type="Pfam" id="PF01741">
    <property type="entry name" value="MscL"/>
    <property type="match status" value="1"/>
</dbReference>
<dbReference type="PRINTS" id="PR01264">
    <property type="entry name" value="MECHCHANNEL"/>
</dbReference>
<dbReference type="SUPFAM" id="SSF81330">
    <property type="entry name" value="Gated mechanosensitive channel"/>
    <property type="match status" value="1"/>
</dbReference>
<dbReference type="PROSITE" id="PS01327">
    <property type="entry name" value="MSCL"/>
    <property type="match status" value="1"/>
</dbReference>
<keyword id="KW-0997">Cell inner membrane</keyword>
<keyword id="KW-1003">Cell membrane</keyword>
<keyword id="KW-0407">Ion channel</keyword>
<keyword id="KW-0406">Ion transport</keyword>
<keyword id="KW-0472">Membrane</keyword>
<keyword id="KW-1185">Reference proteome</keyword>
<keyword id="KW-0812">Transmembrane</keyword>
<keyword id="KW-1133">Transmembrane helix</keyword>
<keyword id="KW-0813">Transport</keyword>
<accession>Q5GXD6</accession>
<feature type="chain" id="PRO_0000238053" description="Large-conductance mechanosensitive channel">
    <location>
        <begin position="1"/>
        <end position="140"/>
    </location>
</feature>
<feature type="transmembrane region" description="Helical" evidence="1">
    <location>
        <begin position="16"/>
        <end position="36"/>
    </location>
</feature>
<feature type="transmembrane region" description="Helical" evidence="1">
    <location>
        <begin position="84"/>
        <end position="104"/>
    </location>
</feature>